<comment type="function">
    <text evidence="1">Divisome component that associates with the complex late in its assembly, after the Z-ring is formed, and is dependent on DivIC and PBP2B for its recruitment to the divisome. Together with EzrA, is a key component of the system that regulates PBP1 localization during cell cycle progression. Its main role could be the removal of PBP1 from the cell pole after pole maturation is completed. Also contributes to the recruitment of PBP1 to the division complex. Not essential for septum formation.</text>
</comment>
<comment type="subunit">
    <text evidence="1">Forms polymers through the coiled coil domains. Interacts with PBP1, MreC and EzrA.</text>
</comment>
<comment type="subcellular location">
    <subcellularLocation>
        <location evidence="1">Cytoplasm</location>
    </subcellularLocation>
    <text evidence="1">Shuttles between the lateral wall and the division site in a cell cycle-dependent manner.</text>
</comment>
<comment type="similarity">
    <text evidence="1">Belongs to the GpsB family.</text>
</comment>
<organism>
    <name type="scientific">Bacillus cereus (strain ATCC 10987 / NRS 248)</name>
    <dbReference type="NCBI Taxonomy" id="222523"/>
    <lineage>
        <taxon>Bacteria</taxon>
        <taxon>Bacillati</taxon>
        <taxon>Bacillota</taxon>
        <taxon>Bacilli</taxon>
        <taxon>Bacillales</taxon>
        <taxon>Bacillaceae</taxon>
        <taxon>Bacillus</taxon>
        <taxon>Bacillus cereus group</taxon>
    </lineage>
</organism>
<reference key="1">
    <citation type="journal article" date="2004" name="Nucleic Acids Res.">
        <title>The genome sequence of Bacillus cereus ATCC 10987 reveals metabolic adaptations and a large plasmid related to Bacillus anthracis pXO1.</title>
        <authorList>
            <person name="Rasko D.A."/>
            <person name="Ravel J."/>
            <person name="Oekstad O.A."/>
            <person name="Helgason E."/>
            <person name="Cer R.Z."/>
            <person name="Jiang L."/>
            <person name="Shores K.A."/>
            <person name="Fouts D.E."/>
            <person name="Tourasse N.J."/>
            <person name="Angiuoli S.V."/>
            <person name="Kolonay J.F."/>
            <person name="Nelson W.C."/>
            <person name="Kolstoe A.-B."/>
            <person name="Fraser C.M."/>
            <person name="Read T.D."/>
        </authorList>
    </citation>
    <scope>NUCLEOTIDE SEQUENCE [LARGE SCALE GENOMIC DNA]</scope>
    <source>
        <strain>ATCC 10987 / NRS 248</strain>
    </source>
</reference>
<protein>
    <recommendedName>
        <fullName evidence="1">Cell cycle protein GpsB</fullName>
    </recommendedName>
    <alternativeName>
        <fullName evidence="1">Guiding PBP1-shuttling protein</fullName>
    </alternativeName>
</protein>
<evidence type="ECO:0000255" key="1">
    <source>
        <dbReference type="HAMAP-Rule" id="MF_02011"/>
    </source>
</evidence>
<keyword id="KW-0131">Cell cycle</keyword>
<keyword id="KW-0132">Cell division</keyword>
<keyword id="KW-0133">Cell shape</keyword>
<keyword id="KW-0175">Coiled coil</keyword>
<keyword id="KW-0963">Cytoplasm</keyword>
<sequence length="111" mass="13020">MISDKIKLTAKDILEKEFKTGMRGYQQEEVDKFLDMIIKDYEAFHKEFEQLKQQNARLKRELEEQKLAATQVPQQPVQTPVAQPVYNNTNTDILKRLSNLEKAVFGSKLYE</sequence>
<proteinExistence type="inferred from homology"/>
<name>GPSB_BACC1</name>
<gene>
    <name evidence="1" type="primary">gpsB</name>
    <name type="ordered locus">BCE_1689</name>
</gene>
<feature type="chain" id="PRO_0000337907" description="Cell cycle protein GpsB">
    <location>
        <begin position="1"/>
        <end position="111"/>
    </location>
</feature>
<feature type="coiled-coil region" evidence="1">
    <location>
        <begin position="38"/>
        <end position="72"/>
    </location>
</feature>
<accession>Q73AT3</accession>
<dbReference type="EMBL" id="AE017194">
    <property type="protein sequence ID" value="AAS40618.1"/>
    <property type="molecule type" value="Genomic_DNA"/>
</dbReference>
<dbReference type="SMR" id="Q73AT3"/>
<dbReference type="KEGG" id="bca:BCE_1689"/>
<dbReference type="HOGENOM" id="CLU_140309_1_0_9"/>
<dbReference type="Proteomes" id="UP000002527">
    <property type="component" value="Chromosome"/>
</dbReference>
<dbReference type="GO" id="GO:0005737">
    <property type="term" value="C:cytoplasm"/>
    <property type="evidence" value="ECO:0007669"/>
    <property type="project" value="UniProtKB-SubCell"/>
</dbReference>
<dbReference type="GO" id="GO:0051301">
    <property type="term" value="P:cell division"/>
    <property type="evidence" value="ECO:0007669"/>
    <property type="project" value="UniProtKB-UniRule"/>
</dbReference>
<dbReference type="GO" id="GO:0008360">
    <property type="term" value="P:regulation of cell shape"/>
    <property type="evidence" value="ECO:0007669"/>
    <property type="project" value="UniProtKB-UniRule"/>
</dbReference>
<dbReference type="Gene3D" id="6.10.250.660">
    <property type="match status" value="1"/>
</dbReference>
<dbReference type="HAMAP" id="MF_02011">
    <property type="entry name" value="GpsB"/>
    <property type="match status" value="1"/>
</dbReference>
<dbReference type="InterPro" id="IPR011229">
    <property type="entry name" value="Cell_cycle_GpsB"/>
</dbReference>
<dbReference type="InterPro" id="IPR019933">
    <property type="entry name" value="DivIVA_domain"/>
</dbReference>
<dbReference type="InterPro" id="IPR007793">
    <property type="entry name" value="DivIVA_fam"/>
</dbReference>
<dbReference type="NCBIfam" id="TIGR03544">
    <property type="entry name" value="DivI1A_domain"/>
    <property type="match status" value="1"/>
</dbReference>
<dbReference type="NCBIfam" id="NF010725">
    <property type="entry name" value="PRK14127.1"/>
    <property type="match status" value="1"/>
</dbReference>
<dbReference type="PANTHER" id="PTHR35794:SF1">
    <property type="entry name" value="CELL CYCLE PROTEIN GPSB"/>
    <property type="match status" value="1"/>
</dbReference>
<dbReference type="PANTHER" id="PTHR35794">
    <property type="entry name" value="CELL DIVISION PROTEIN DIVIVA"/>
    <property type="match status" value="1"/>
</dbReference>
<dbReference type="Pfam" id="PF05103">
    <property type="entry name" value="DivIVA"/>
    <property type="match status" value="1"/>
</dbReference>
<dbReference type="PIRSF" id="PIRSF029938">
    <property type="entry name" value="UCP029938"/>
    <property type="match status" value="1"/>
</dbReference>